<protein>
    <recommendedName>
        <fullName evidence="1">DNA-directed RNA polymerase subunit beta'</fullName>
        <shortName evidence="1">RNAP subunit beta'</shortName>
        <ecNumber evidence="1">2.7.7.6</ecNumber>
    </recommendedName>
    <alternativeName>
        <fullName evidence="1">RNA polymerase subunit beta'</fullName>
    </alternativeName>
    <alternativeName>
        <fullName evidence="1">Transcriptase subunit beta'</fullName>
    </alternativeName>
</protein>
<dbReference type="EC" id="2.7.7.6" evidence="1"/>
<dbReference type="EMBL" id="CP000001">
    <property type="protein sequence ID" value="AAU20134.1"/>
    <property type="molecule type" value="Genomic_DNA"/>
</dbReference>
<dbReference type="RefSeq" id="WP_000567937.1">
    <property type="nucleotide sequence ID" value="NZ_CP009968.1"/>
</dbReference>
<dbReference type="SMR" id="Q63H97"/>
<dbReference type="GeneID" id="93010950"/>
<dbReference type="KEGG" id="bcz:BCE33L0097"/>
<dbReference type="PATRIC" id="fig|288681.22.peg.54"/>
<dbReference type="Proteomes" id="UP000002612">
    <property type="component" value="Chromosome"/>
</dbReference>
<dbReference type="GO" id="GO:0000428">
    <property type="term" value="C:DNA-directed RNA polymerase complex"/>
    <property type="evidence" value="ECO:0007669"/>
    <property type="project" value="UniProtKB-KW"/>
</dbReference>
<dbReference type="GO" id="GO:0003677">
    <property type="term" value="F:DNA binding"/>
    <property type="evidence" value="ECO:0007669"/>
    <property type="project" value="UniProtKB-UniRule"/>
</dbReference>
<dbReference type="GO" id="GO:0003899">
    <property type="term" value="F:DNA-directed RNA polymerase activity"/>
    <property type="evidence" value="ECO:0007669"/>
    <property type="project" value="UniProtKB-UniRule"/>
</dbReference>
<dbReference type="GO" id="GO:0000287">
    <property type="term" value="F:magnesium ion binding"/>
    <property type="evidence" value="ECO:0007669"/>
    <property type="project" value="UniProtKB-UniRule"/>
</dbReference>
<dbReference type="GO" id="GO:0008270">
    <property type="term" value="F:zinc ion binding"/>
    <property type="evidence" value="ECO:0007669"/>
    <property type="project" value="UniProtKB-UniRule"/>
</dbReference>
<dbReference type="GO" id="GO:0006351">
    <property type="term" value="P:DNA-templated transcription"/>
    <property type="evidence" value="ECO:0007669"/>
    <property type="project" value="UniProtKB-UniRule"/>
</dbReference>
<dbReference type="CDD" id="cd02655">
    <property type="entry name" value="RNAP_beta'_C"/>
    <property type="match status" value="1"/>
</dbReference>
<dbReference type="CDD" id="cd01609">
    <property type="entry name" value="RNAP_beta'_N"/>
    <property type="match status" value="1"/>
</dbReference>
<dbReference type="FunFam" id="1.10.150.390:FF:000002">
    <property type="entry name" value="DNA-directed RNA polymerase subunit beta"/>
    <property type="match status" value="1"/>
</dbReference>
<dbReference type="FunFam" id="1.10.40.90:FF:000001">
    <property type="entry name" value="DNA-directed RNA polymerase subunit beta"/>
    <property type="match status" value="1"/>
</dbReference>
<dbReference type="FunFam" id="4.10.860.120:FF:000001">
    <property type="entry name" value="DNA-directed RNA polymerase subunit beta"/>
    <property type="match status" value="1"/>
</dbReference>
<dbReference type="Gene3D" id="1.10.132.30">
    <property type="match status" value="1"/>
</dbReference>
<dbReference type="Gene3D" id="1.10.150.390">
    <property type="match status" value="1"/>
</dbReference>
<dbReference type="Gene3D" id="1.10.1790.20">
    <property type="match status" value="1"/>
</dbReference>
<dbReference type="Gene3D" id="1.10.40.90">
    <property type="match status" value="1"/>
</dbReference>
<dbReference type="Gene3D" id="2.40.40.20">
    <property type="match status" value="1"/>
</dbReference>
<dbReference type="Gene3D" id="2.40.50.100">
    <property type="match status" value="1"/>
</dbReference>
<dbReference type="Gene3D" id="4.10.860.120">
    <property type="entry name" value="RNA polymerase II, clamp domain"/>
    <property type="match status" value="1"/>
</dbReference>
<dbReference type="Gene3D" id="1.10.274.100">
    <property type="entry name" value="RNA polymerase Rpb1, domain 3"/>
    <property type="match status" value="1"/>
</dbReference>
<dbReference type="HAMAP" id="MF_01322">
    <property type="entry name" value="RNApol_bact_RpoC"/>
    <property type="match status" value="1"/>
</dbReference>
<dbReference type="InterPro" id="IPR045867">
    <property type="entry name" value="DNA-dir_RpoC_beta_prime"/>
</dbReference>
<dbReference type="InterPro" id="IPR012754">
    <property type="entry name" value="DNA-dir_RpoC_beta_prime_bact"/>
</dbReference>
<dbReference type="InterPro" id="IPR000722">
    <property type="entry name" value="RNA_pol_asu"/>
</dbReference>
<dbReference type="InterPro" id="IPR006592">
    <property type="entry name" value="RNA_pol_N"/>
</dbReference>
<dbReference type="InterPro" id="IPR007080">
    <property type="entry name" value="RNA_pol_Rpb1_1"/>
</dbReference>
<dbReference type="InterPro" id="IPR007066">
    <property type="entry name" value="RNA_pol_Rpb1_3"/>
</dbReference>
<dbReference type="InterPro" id="IPR042102">
    <property type="entry name" value="RNA_pol_Rpb1_3_sf"/>
</dbReference>
<dbReference type="InterPro" id="IPR007083">
    <property type="entry name" value="RNA_pol_Rpb1_4"/>
</dbReference>
<dbReference type="InterPro" id="IPR007081">
    <property type="entry name" value="RNA_pol_Rpb1_5"/>
</dbReference>
<dbReference type="InterPro" id="IPR044893">
    <property type="entry name" value="RNA_pol_Rpb1_clamp_domain"/>
</dbReference>
<dbReference type="InterPro" id="IPR038120">
    <property type="entry name" value="Rpb1_funnel_sf"/>
</dbReference>
<dbReference type="NCBIfam" id="TIGR02386">
    <property type="entry name" value="rpoC_TIGR"/>
    <property type="match status" value="1"/>
</dbReference>
<dbReference type="PANTHER" id="PTHR19376">
    <property type="entry name" value="DNA-DIRECTED RNA POLYMERASE"/>
    <property type="match status" value="1"/>
</dbReference>
<dbReference type="PANTHER" id="PTHR19376:SF54">
    <property type="entry name" value="DNA-DIRECTED RNA POLYMERASE SUBUNIT BETA"/>
    <property type="match status" value="1"/>
</dbReference>
<dbReference type="Pfam" id="PF04997">
    <property type="entry name" value="RNA_pol_Rpb1_1"/>
    <property type="match status" value="1"/>
</dbReference>
<dbReference type="Pfam" id="PF00623">
    <property type="entry name" value="RNA_pol_Rpb1_2"/>
    <property type="match status" value="2"/>
</dbReference>
<dbReference type="Pfam" id="PF04983">
    <property type="entry name" value="RNA_pol_Rpb1_3"/>
    <property type="match status" value="1"/>
</dbReference>
<dbReference type="Pfam" id="PF05000">
    <property type="entry name" value="RNA_pol_Rpb1_4"/>
    <property type="match status" value="1"/>
</dbReference>
<dbReference type="Pfam" id="PF04998">
    <property type="entry name" value="RNA_pol_Rpb1_5"/>
    <property type="match status" value="1"/>
</dbReference>
<dbReference type="SMART" id="SM00663">
    <property type="entry name" value="RPOLA_N"/>
    <property type="match status" value="1"/>
</dbReference>
<dbReference type="SUPFAM" id="SSF64484">
    <property type="entry name" value="beta and beta-prime subunits of DNA dependent RNA-polymerase"/>
    <property type="match status" value="1"/>
</dbReference>
<gene>
    <name evidence="1" type="primary">rpoC</name>
    <name type="ordered locus">BCE33L0097</name>
</gene>
<evidence type="ECO:0000255" key="1">
    <source>
        <dbReference type="HAMAP-Rule" id="MF_01322"/>
    </source>
</evidence>
<proteinExistence type="inferred from homology"/>
<sequence>MIDVNNFEYMKIGLASPDKIRSWSYGEVKKPETINYRTLKPEKDGLFCERIFGPQKDWECHCGKYKRVRYKGVVCDRCGVEVTRAKVRRERMGHIELAAPVSHIWYFKGIPSRMGLVLDMSPRALEEVIYFASYVVTESGDTPLDKKQLLSEKEYRAYRDRYGSTFQAAMGAEAIKKLLQDIDLDKEVDFLKEELKTAQGQRRTRAIKRLEVLEAFRNSGNEPSWMILDVLPVIPPELRPMVQLDGGRFATSDLNDLYRRVINRNNRLKRLLDLGAPSIIVQNEKRMLQEAVDALIDNGRRGRPVTGPGNRPLKSLSHMLKGKQGRFRQNLLGKRVDYSGRSVIVVGPNLKMYQCGLPKEMALELFKPFVMKELVEKGLAHNIKSAKRKIERVQPEVWDVLESVIKEHPVLLNRAPTLHRLGIQAFEPTLVEGRAIRLHPLVCTAYNADFDGDQMAVHVPLSSEAQAEARLLMLAAQNILNPKDGKPVVTPSQDMVLGNYYLTLEREGAIGEGMVFKDANEALLAYQNGYVHLHTRVAVAASAVNNATFTEEQKSMLLLTTVGKLIFNEILPESFPYINEPTNSNLEKETPAKYFVEKGANIKEIIASREEVAPFSKKILGNIIAEVFKRFKITETSRMLDRMKNLGFKYSTKAGITVGVSDILVLGEKDEILHEAQAKVDNVIKQFRRGLITEEERYDRVISIWSNAKDVIQGKLMKSLNKRNPIFMMSDSGARGNASNFTQLAGMRGLMANPSGRIIELPIKSSFREGLTVLEYFISTHGARKGLADTALKTADSGYLTRRLVDVAQDVIVREDDCGTDRGLLIGAIKEGNEVIESLYDRLVGRFARKTVKHPETGEVLVAENQLITEDIAHIVENSGVETVNIRSAFTCNTRHGVCKKCYGRNLATGTDVEVGEAVGIIAAQSIGEPGTQLTMRTFHTGGVAGDDITQGLPRIQEIFEARNPKGQAVISEIDGVIAAINDVKDRQEVVVQGEVEARTYAIPYGARLKVIPGQKISHGKELTEGSIDPKELLKVTDITAVQEYLLREVQKVYRMQGVEIGDKHVEVMVRQMLRKVRVSDAGETDVLPGTLLDIHQFTDANAKVLLQGKQPATARPVLLGITKASLETDSFLSAASFQETTRVLTDAAIKGKRDELLGLKENVIIGKLVPAGTGMNRYRKVDLVKTTQDDMNVENDEVYVEQ</sequence>
<reference key="1">
    <citation type="journal article" date="2006" name="J. Bacteriol.">
        <title>Pathogenomic sequence analysis of Bacillus cereus and Bacillus thuringiensis isolates closely related to Bacillus anthracis.</title>
        <authorList>
            <person name="Han C.S."/>
            <person name="Xie G."/>
            <person name="Challacombe J.F."/>
            <person name="Altherr M.R."/>
            <person name="Bhotika S.S."/>
            <person name="Bruce D."/>
            <person name="Campbell C.S."/>
            <person name="Campbell M.L."/>
            <person name="Chen J."/>
            <person name="Chertkov O."/>
            <person name="Cleland C."/>
            <person name="Dimitrijevic M."/>
            <person name="Doggett N.A."/>
            <person name="Fawcett J.J."/>
            <person name="Glavina T."/>
            <person name="Goodwin L.A."/>
            <person name="Hill K.K."/>
            <person name="Hitchcock P."/>
            <person name="Jackson P.J."/>
            <person name="Keim P."/>
            <person name="Kewalramani A.R."/>
            <person name="Longmire J."/>
            <person name="Lucas S."/>
            <person name="Malfatti S."/>
            <person name="McMurry K."/>
            <person name="Meincke L.J."/>
            <person name="Misra M."/>
            <person name="Moseman B.L."/>
            <person name="Mundt M."/>
            <person name="Munk A.C."/>
            <person name="Okinaka R.T."/>
            <person name="Parson-Quintana B."/>
            <person name="Reilly L.P."/>
            <person name="Richardson P."/>
            <person name="Robinson D.L."/>
            <person name="Rubin E."/>
            <person name="Saunders E."/>
            <person name="Tapia R."/>
            <person name="Tesmer J.G."/>
            <person name="Thayer N."/>
            <person name="Thompson L.S."/>
            <person name="Tice H."/>
            <person name="Ticknor L.O."/>
            <person name="Wills P.L."/>
            <person name="Brettin T.S."/>
            <person name="Gilna P."/>
        </authorList>
    </citation>
    <scope>NUCLEOTIDE SEQUENCE [LARGE SCALE GENOMIC DNA]</scope>
    <source>
        <strain>ZK / E33L</strain>
    </source>
</reference>
<organism>
    <name type="scientific">Bacillus cereus (strain ZK / E33L)</name>
    <dbReference type="NCBI Taxonomy" id="288681"/>
    <lineage>
        <taxon>Bacteria</taxon>
        <taxon>Bacillati</taxon>
        <taxon>Bacillota</taxon>
        <taxon>Bacilli</taxon>
        <taxon>Bacillales</taxon>
        <taxon>Bacillaceae</taxon>
        <taxon>Bacillus</taxon>
        <taxon>Bacillus cereus group</taxon>
    </lineage>
</organism>
<name>RPOC_BACCZ</name>
<keyword id="KW-0240">DNA-directed RNA polymerase</keyword>
<keyword id="KW-0460">Magnesium</keyword>
<keyword id="KW-0479">Metal-binding</keyword>
<keyword id="KW-0548">Nucleotidyltransferase</keyword>
<keyword id="KW-0804">Transcription</keyword>
<keyword id="KW-0808">Transferase</keyword>
<keyword id="KW-0862">Zinc</keyword>
<accession>Q63H97</accession>
<comment type="function">
    <text evidence="1">DNA-dependent RNA polymerase catalyzes the transcription of DNA into RNA using the four ribonucleoside triphosphates as substrates.</text>
</comment>
<comment type="catalytic activity">
    <reaction evidence="1">
        <text>RNA(n) + a ribonucleoside 5'-triphosphate = RNA(n+1) + diphosphate</text>
        <dbReference type="Rhea" id="RHEA:21248"/>
        <dbReference type="Rhea" id="RHEA-COMP:14527"/>
        <dbReference type="Rhea" id="RHEA-COMP:17342"/>
        <dbReference type="ChEBI" id="CHEBI:33019"/>
        <dbReference type="ChEBI" id="CHEBI:61557"/>
        <dbReference type="ChEBI" id="CHEBI:140395"/>
        <dbReference type="EC" id="2.7.7.6"/>
    </reaction>
</comment>
<comment type="cofactor">
    <cofactor evidence="1">
        <name>Mg(2+)</name>
        <dbReference type="ChEBI" id="CHEBI:18420"/>
    </cofactor>
    <text evidence="1">Binds 1 Mg(2+) ion per subunit.</text>
</comment>
<comment type="cofactor">
    <cofactor evidence="1">
        <name>Zn(2+)</name>
        <dbReference type="ChEBI" id="CHEBI:29105"/>
    </cofactor>
    <text evidence="1">Binds 2 Zn(2+) ions per subunit.</text>
</comment>
<comment type="subunit">
    <text evidence="1">The RNAP catalytic core consists of 2 alpha, 1 beta, 1 beta' and 1 omega subunit. When a sigma factor is associated with the core the holoenzyme is formed, which can initiate transcription.</text>
</comment>
<comment type="similarity">
    <text evidence="1">Belongs to the RNA polymerase beta' chain family.</text>
</comment>
<feature type="chain" id="PRO_0000225508" description="DNA-directed RNA polymerase subunit beta'">
    <location>
        <begin position="1"/>
        <end position="1203"/>
    </location>
</feature>
<feature type="binding site" evidence="1">
    <location>
        <position position="60"/>
    </location>
    <ligand>
        <name>Zn(2+)</name>
        <dbReference type="ChEBI" id="CHEBI:29105"/>
        <label>1</label>
    </ligand>
</feature>
<feature type="binding site" evidence="1">
    <location>
        <position position="62"/>
    </location>
    <ligand>
        <name>Zn(2+)</name>
        <dbReference type="ChEBI" id="CHEBI:29105"/>
        <label>1</label>
    </ligand>
</feature>
<feature type="binding site" evidence="1">
    <location>
        <position position="75"/>
    </location>
    <ligand>
        <name>Zn(2+)</name>
        <dbReference type="ChEBI" id="CHEBI:29105"/>
        <label>1</label>
    </ligand>
</feature>
<feature type="binding site" evidence="1">
    <location>
        <position position="78"/>
    </location>
    <ligand>
        <name>Zn(2+)</name>
        <dbReference type="ChEBI" id="CHEBI:29105"/>
        <label>1</label>
    </ligand>
</feature>
<feature type="binding site" evidence="1">
    <location>
        <position position="449"/>
    </location>
    <ligand>
        <name>Mg(2+)</name>
        <dbReference type="ChEBI" id="CHEBI:18420"/>
    </ligand>
</feature>
<feature type="binding site" evidence="1">
    <location>
        <position position="451"/>
    </location>
    <ligand>
        <name>Mg(2+)</name>
        <dbReference type="ChEBI" id="CHEBI:18420"/>
    </ligand>
</feature>
<feature type="binding site" evidence="1">
    <location>
        <position position="453"/>
    </location>
    <ligand>
        <name>Mg(2+)</name>
        <dbReference type="ChEBI" id="CHEBI:18420"/>
    </ligand>
</feature>
<feature type="binding site" evidence="1">
    <location>
        <position position="818"/>
    </location>
    <ligand>
        <name>Zn(2+)</name>
        <dbReference type="ChEBI" id="CHEBI:29105"/>
        <label>2</label>
    </ligand>
</feature>
<feature type="binding site" evidence="1">
    <location>
        <position position="892"/>
    </location>
    <ligand>
        <name>Zn(2+)</name>
        <dbReference type="ChEBI" id="CHEBI:29105"/>
        <label>2</label>
    </ligand>
</feature>
<feature type="binding site" evidence="1">
    <location>
        <position position="899"/>
    </location>
    <ligand>
        <name>Zn(2+)</name>
        <dbReference type="ChEBI" id="CHEBI:29105"/>
        <label>2</label>
    </ligand>
</feature>
<feature type="binding site" evidence="1">
    <location>
        <position position="902"/>
    </location>
    <ligand>
        <name>Zn(2+)</name>
        <dbReference type="ChEBI" id="CHEBI:29105"/>
        <label>2</label>
    </ligand>
</feature>